<comment type="function">
    <text evidence="1">Catalyzes the attachment of glutamate to tRNA(Glu) in a two-step reaction: glutamate is first activated by ATP to form Glu-AMP and then transferred to the acceptor end of tRNA(Glu).</text>
</comment>
<comment type="catalytic activity">
    <reaction evidence="1">
        <text>tRNA(Glu) + L-glutamate + ATP = L-glutamyl-tRNA(Glu) + AMP + diphosphate</text>
        <dbReference type="Rhea" id="RHEA:23540"/>
        <dbReference type="Rhea" id="RHEA-COMP:9663"/>
        <dbReference type="Rhea" id="RHEA-COMP:9680"/>
        <dbReference type="ChEBI" id="CHEBI:29985"/>
        <dbReference type="ChEBI" id="CHEBI:30616"/>
        <dbReference type="ChEBI" id="CHEBI:33019"/>
        <dbReference type="ChEBI" id="CHEBI:78442"/>
        <dbReference type="ChEBI" id="CHEBI:78520"/>
        <dbReference type="ChEBI" id="CHEBI:456215"/>
        <dbReference type="EC" id="6.1.1.17"/>
    </reaction>
</comment>
<comment type="cofactor">
    <cofactor evidence="1">
        <name>Zn(2+)</name>
        <dbReference type="ChEBI" id="CHEBI:29105"/>
    </cofactor>
    <text evidence="1">Binds 1 zinc ion per subunit.</text>
</comment>
<comment type="subunit">
    <text evidence="1">Monomer.</text>
</comment>
<comment type="subcellular location">
    <subcellularLocation>
        <location evidence="1">Cytoplasm</location>
    </subcellularLocation>
</comment>
<comment type="similarity">
    <text evidence="1">Belongs to the class-I aminoacyl-tRNA synthetase family. Glutamate--tRNA ligase type 1 subfamily.</text>
</comment>
<keyword id="KW-0030">Aminoacyl-tRNA synthetase</keyword>
<keyword id="KW-0067">ATP-binding</keyword>
<keyword id="KW-0963">Cytoplasm</keyword>
<keyword id="KW-0436">Ligase</keyword>
<keyword id="KW-0479">Metal-binding</keyword>
<keyword id="KW-0547">Nucleotide-binding</keyword>
<keyword id="KW-0648">Protein biosynthesis</keyword>
<keyword id="KW-1185">Reference proteome</keyword>
<keyword id="KW-0862">Zinc</keyword>
<protein>
    <recommendedName>
        <fullName evidence="1">Glutamate--tRNA ligase</fullName>
        <ecNumber evidence="1">6.1.1.17</ecNumber>
    </recommendedName>
    <alternativeName>
        <fullName evidence="1">Glutamyl-tRNA synthetase</fullName>
        <shortName evidence="1">GluRS</shortName>
    </alternativeName>
</protein>
<gene>
    <name evidence="1" type="primary">gltX</name>
    <name type="ordered locus">Anae109_1264</name>
</gene>
<name>SYE_ANADF</name>
<dbReference type="EC" id="6.1.1.17" evidence="1"/>
<dbReference type="EMBL" id="CP000769">
    <property type="protein sequence ID" value="ABS25472.1"/>
    <property type="molecule type" value="Genomic_DNA"/>
</dbReference>
<dbReference type="RefSeq" id="WP_011985578.1">
    <property type="nucleotide sequence ID" value="NC_009675.1"/>
</dbReference>
<dbReference type="SMR" id="A7H9S6"/>
<dbReference type="STRING" id="404589.Anae109_1264"/>
<dbReference type="KEGG" id="afw:Anae109_1264"/>
<dbReference type="eggNOG" id="COG0008">
    <property type="taxonomic scope" value="Bacteria"/>
</dbReference>
<dbReference type="HOGENOM" id="CLU_015768_6_3_7"/>
<dbReference type="OrthoDB" id="9807503at2"/>
<dbReference type="Proteomes" id="UP000006382">
    <property type="component" value="Chromosome"/>
</dbReference>
<dbReference type="GO" id="GO:0005829">
    <property type="term" value="C:cytosol"/>
    <property type="evidence" value="ECO:0007669"/>
    <property type="project" value="TreeGrafter"/>
</dbReference>
<dbReference type="GO" id="GO:0005524">
    <property type="term" value="F:ATP binding"/>
    <property type="evidence" value="ECO:0007669"/>
    <property type="project" value="UniProtKB-UniRule"/>
</dbReference>
<dbReference type="GO" id="GO:0004818">
    <property type="term" value="F:glutamate-tRNA ligase activity"/>
    <property type="evidence" value="ECO:0007669"/>
    <property type="project" value="UniProtKB-UniRule"/>
</dbReference>
<dbReference type="GO" id="GO:0000049">
    <property type="term" value="F:tRNA binding"/>
    <property type="evidence" value="ECO:0007669"/>
    <property type="project" value="InterPro"/>
</dbReference>
<dbReference type="GO" id="GO:0008270">
    <property type="term" value="F:zinc ion binding"/>
    <property type="evidence" value="ECO:0007669"/>
    <property type="project" value="UniProtKB-UniRule"/>
</dbReference>
<dbReference type="GO" id="GO:0006424">
    <property type="term" value="P:glutamyl-tRNA aminoacylation"/>
    <property type="evidence" value="ECO:0007669"/>
    <property type="project" value="UniProtKB-UniRule"/>
</dbReference>
<dbReference type="CDD" id="cd00808">
    <property type="entry name" value="GluRS_core"/>
    <property type="match status" value="1"/>
</dbReference>
<dbReference type="FunFam" id="3.40.50.620:FF:000007">
    <property type="entry name" value="Glutamate--tRNA ligase"/>
    <property type="match status" value="1"/>
</dbReference>
<dbReference type="Gene3D" id="1.10.10.350">
    <property type="match status" value="1"/>
</dbReference>
<dbReference type="Gene3D" id="1.10.8.70">
    <property type="entry name" value="Glutamate-tRNA synthetase, class I, anticodon-binding domain 1"/>
    <property type="match status" value="1"/>
</dbReference>
<dbReference type="Gene3D" id="3.40.50.620">
    <property type="entry name" value="HUPs"/>
    <property type="match status" value="1"/>
</dbReference>
<dbReference type="HAMAP" id="MF_00022">
    <property type="entry name" value="Glu_tRNA_synth_type1"/>
    <property type="match status" value="1"/>
</dbReference>
<dbReference type="InterPro" id="IPR045462">
    <property type="entry name" value="aa-tRNA-synth_I_cd-bd"/>
</dbReference>
<dbReference type="InterPro" id="IPR020751">
    <property type="entry name" value="aa-tRNA-synth_I_codon-bd_sub2"/>
</dbReference>
<dbReference type="InterPro" id="IPR001412">
    <property type="entry name" value="aa-tRNA-synth_I_CS"/>
</dbReference>
<dbReference type="InterPro" id="IPR008925">
    <property type="entry name" value="aa_tRNA-synth_I_cd-bd_sf"/>
</dbReference>
<dbReference type="InterPro" id="IPR004527">
    <property type="entry name" value="Glu-tRNA-ligase_bac/mito"/>
</dbReference>
<dbReference type="InterPro" id="IPR020752">
    <property type="entry name" value="Glu-tRNA-synth_I_codon-bd_sub1"/>
</dbReference>
<dbReference type="InterPro" id="IPR000924">
    <property type="entry name" value="Glu/Gln-tRNA-synth"/>
</dbReference>
<dbReference type="InterPro" id="IPR020058">
    <property type="entry name" value="Glu/Gln-tRNA-synth_Ib_cat-dom"/>
</dbReference>
<dbReference type="InterPro" id="IPR049940">
    <property type="entry name" value="GluQ/Sye"/>
</dbReference>
<dbReference type="InterPro" id="IPR033910">
    <property type="entry name" value="GluRS_core"/>
</dbReference>
<dbReference type="InterPro" id="IPR014729">
    <property type="entry name" value="Rossmann-like_a/b/a_fold"/>
</dbReference>
<dbReference type="NCBIfam" id="TIGR00464">
    <property type="entry name" value="gltX_bact"/>
    <property type="match status" value="1"/>
</dbReference>
<dbReference type="PANTHER" id="PTHR43311">
    <property type="entry name" value="GLUTAMATE--TRNA LIGASE"/>
    <property type="match status" value="1"/>
</dbReference>
<dbReference type="PANTHER" id="PTHR43311:SF2">
    <property type="entry name" value="GLUTAMATE--TRNA LIGASE, MITOCHONDRIAL-RELATED"/>
    <property type="match status" value="1"/>
</dbReference>
<dbReference type="Pfam" id="PF19269">
    <property type="entry name" value="Anticodon_2"/>
    <property type="match status" value="1"/>
</dbReference>
<dbReference type="Pfam" id="PF00749">
    <property type="entry name" value="tRNA-synt_1c"/>
    <property type="match status" value="1"/>
</dbReference>
<dbReference type="PRINTS" id="PR00987">
    <property type="entry name" value="TRNASYNTHGLU"/>
</dbReference>
<dbReference type="SUPFAM" id="SSF48163">
    <property type="entry name" value="An anticodon-binding domain of class I aminoacyl-tRNA synthetases"/>
    <property type="match status" value="1"/>
</dbReference>
<dbReference type="SUPFAM" id="SSF52374">
    <property type="entry name" value="Nucleotidylyl transferase"/>
    <property type="match status" value="1"/>
</dbReference>
<dbReference type="PROSITE" id="PS00178">
    <property type="entry name" value="AA_TRNA_LIGASE_I"/>
    <property type="match status" value="1"/>
</dbReference>
<sequence>MDKPRVRFAPSPTGYLHIGGARTALFNWLWARRNGGTFVLRIEDTDRERSTQAAVDAIFDGLRWLGLDWDEGPDVGGPHGPYFQTQRLEIYKTHAEKLIREGKAYACYCTKDVLDAQRKQAEAEKRQFRYPGTCRELPYDPSRPHVIRFRVPQTGSKTFVDLVKGPIETPYEVLQDEVILRGDGVPLYNFGAVVDDVTMAINLVARGDDHVNNTARQILMYEALGYPAPRFAHLPMILGADKTRLSKRHGATSVTAYRDMGYLPEAVVNYLVRLGWSHGDQELFTRDELVRFFDFKDVGATAGVFNQDKMAWVNHEWLKKLSDEELARRALPYFQAAGLPAADDAKLRHVCAVARERARTFGEYVQQFRYFYAPVQLDPKAKDKFLTQDTRPILEAIRAGIAALEALETAALEKLFHDEAAKRGLGLGKVAQPVRVALTGGTASPGMYDVLQILGKDEALRRLDDALRIIG</sequence>
<accession>A7H9S6</accession>
<reference key="1">
    <citation type="journal article" date="2015" name="Genome Announc.">
        <title>Complete genome sequence of Anaeromyxobacter sp. Fw109-5, an anaerobic, metal-reducing bacterium isolated from a contaminated subsurface environment.</title>
        <authorList>
            <person name="Hwang C."/>
            <person name="Copeland A."/>
            <person name="Lucas S."/>
            <person name="Lapidus A."/>
            <person name="Barry K."/>
            <person name="Glavina Del Rio T."/>
            <person name="Dalin E."/>
            <person name="Tice H."/>
            <person name="Pitluck S."/>
            <person name="Sims D."/>
            <person name="Brettin T."/>
            <person name="Bruce D.C."/>
            <person name="Detter J.C."/>
            <person name="Han C.S."/>
            <person name="Schmutz J."/>
            <person name="Larimer F.W."/>
            <person name="Land M.L."/>
            <person name="Hauser L.J."/>
            <person name="Kyrpides N."/>
            <person name="Lykidis A."/>
            <person name="Richardson P."/>
            <person name="Belieav A."/>
            <person name="Sanford R.A."/>
            <person name="Loeffler F.E."/>
            <person name="Fields M.W."/>
        </authorList>
    </citation>
    <scope>NUCLEOTIDE SEQUENCE [LARGE SCALE GENOMIC DNA]</scope>
    <source>
        <strain>Fw109-5</strain>
    </source>
</reference>
<organism>
    <name type="scientific">Anaeromyxobacter sp. (strain Fw109-5)</name>
    <dbReference type="NCBI Taxonomy" id="404589"/>
    <lineage>
        <taxon>Bacteria</taxon>
        <taxon>Pseudomonadati</taxon>
        <taxon>Myxococcota</taxon>
        <taxon>Myxococcia</taxon>
        <taxon>Myxococcales</taxon>
        <taxon>Cystobacterineae</taxon>
        <taxon>Anaeromyxobacteraceae</taxon>
        <taxon>Anaeromyxobacter</taxon>
    </lineage>
</organism>
<proteinExistence type="inferred from homology"/>
<evidence type="ECO:0000255" key="1">
    <source>
        <dbReference type="HAMAP-Rule" id="MF_00022"/>
    </source>
</evidence>
<feature type="chain" id="PRO_1000001870" description="Glutamate--tRNA ligase">
    <location>
        <begin position="1"/>
        <end position="471"/>
    </location>
</feature>
<feature type="short sequence motif" description="'HIGH' region" evidence="1">
    <location>
        <begin position="10"/>
        <end position="20"/>
    </location>
</feature>
<feature type="short sequence motif" description="'KMSKS' region" evidence="1">
    <location>
        <begin position="244"/>
        <end position="248"/>
    </location>
</feature>
<feature type="binding site" evidence="1">
    <location>
        <position position="107"/>
    </location>
    <ligand>
        <name>Zn(2+)</name>
        <dbReference type="ChEBI" id="CHEBI:29105"/>
    </ligand>
</feature>
<feature type="binding site" evidence="1">
    <location>
        <position position="109"/>
    </location>
    <ligand>
        <name>Zn(2+)</name>
        <dbReference type="ChEBI" id="CHEBI:29105"/>
    </ligand>
</feature>
<feature type="binding site" evidence="1">
    <location>
        <position position="134"/>
    </location>
    <ligand>
        <name>Zn(2+)</name>
        <dbReference type="ChEBI" id="CHEBI:29105"/>
    </ligand>
</feature>
<feature type="binding site" evidence="1">
    <location>
        <position position="136"/>
    </location>
    <ligand>
        <name>Zn(2+)</name>
        <dbReference type="ChEBI" id="CHEBI:29105"/>
    </ligand>
</feature>
<feature type="binding site" evidence="1">
    <location>
        <position position="247"/>
    </location>
    <ligand>
        <name>ATP</name>
        <dbReference type="ChEBI" id="CHEBI:30616"/>
    </ligand>
</feature>